<proteinExistence type="evidence at transcript level"/>
<keyword id="KW-1015">Disulfide bond</keyword>
<keyword id="KW-0325">Glycoprotein</keyword>
<keyword id="KW-0378">Hydrolase</keyword>
<keyword id="KW-0472">Membrane</keyword>
<keyword id="KW-0645">Protease</keyword>
<keyword id="KW-1185">Reference proteome</keyword>
<keyword id="KW-0720">Serine protease</keyword>
<keyword id="KW-0732">Signal</keyword>
<keyword id="KW-0812">Transmembrane</keyword>
<keyword id="KW-1133">Transmembrane helix</keyword>
<feature type="signal peptide" evidence="2">
    <location>
        <begin position="1"/>
        <end position="27"/>
    </location>
</feature>
<feature type="chain" id="PRO_0000328817" description="Serine protease 52">
    <location>
        <begin position="28"/>
        <end position="321"/>
    </location>
</feature>
<feature type="transmembrane region" description="Helical" evidence="2">
    <location>
        <begin position="300"/>
        <end position="320"/>
    </location>
</feature>
<feature type="domain" description="Peptidase S1" evidence="3">
    <location>
        <begin position="56"/>
        <end position="287"/>
    </location>
</feature>
<feature type="active site" description="Charge relay system" evidence="1">
    <location>
        <position position="96"/>
    </location>
</feature>
<feature type="active site" description="Charge relay system" evidence="1">
    <location>
        <position position="142"/>
    </location>
</feature>
<feature type="active site" description="Charge relay system" evidence="1">
    <location>
        <position position="236"/>
    </location>
</feature>
<feature type="glycosylation site" description="N-linked (GlcNAc...) asparagine" evidence="2">
    <location>
        <position position="153"/>
    </location>
</feature>
<feature type="disulfide bond" evidence="3">
    <location>
        <begin position="81"/>
        <end position="97"/>
    </location>
</feature>
<feature type="disulfide bond" evidence="3">
    <location>
        <begin position="175"/>
        <end position="242"/>
    </location>
</feature>
<feature type="disulfide bond" evidence="3">
    <location>
        <begin position="208"/>
        <end position="221"/>
    </location>
</feature>
<feature type="disulfide bond" evidence="3">
    <location>
        <begin position="232"/>
        <end position="263"/>
    </location>
</feature>
<feature type="sequence conflict" description="In Ref. 1; BAF80445." evidence="4" ref="1">
    <original>E</original>
    <variation>G</variation>
    <location>
        <position position="49"/>
    </location>
</feature>
<protein>
    <recommendedName>
        <fullName>Serine protease 52</fullName>
        <ecNumber>3.4.21.-</ecNumber>
    </recommendedName>
    <alternativeName>
        <fullName>Testicular-specific serine protease 3</fullName>
    </alternativeName>
</protein>
<name>PRS52_MOUSE</name>
<comment type="function">
    <text evidence="1">Probable serine protease.</text>
</comment>
<comment type="subcellular location">
    <subcellularLocation>
        <location evidence="4">Membrane</location>
        <topology evidence="4">Single-pass type I membrane protein</topology>
    </subcellularLocation>
</comment>
<comment type="similarity">
    <text evidence="3">Belongs to the peptidase S1 family.</text>
</comment>
<comment type="sequence caution" evidence="4">
    <conflict type="erroneous initiation">
        <sequence resource="EMBL-CDS" id="BAB24725"/>
    </conflict>
    <text>Extended N-terminus.</text>
</comment>
<sequence>MKRWKDRRTGLLLPLVLLLFGACSSLAWVCGRRMSSRSQQLNNASAIVEGKPASAIVGGKPANILEFPWHVGIMNHGSHLCGGSILNEWWVLSASHCFDQLNNSKLEIIHGTEDLSTKGIKYQKVDKLFLHPKFDDWLLDNDIALLLLKSPLNLSVNRIPICTSEISDIQAWRNCWVTGWGITNTSEKGVQPTILQAVKVDLYRWDWCGYILSLLTKNMLCAGTQDPGKDACQGDSGGALVCNKKRNTAIWYQVGIVSWGMGCGKKNLPGVYTKVSHYVRWISKQTAKAGRPYMYEQNSACPLVLSCRAILFLYFVMFLLT</sequence>
<gene>
    <name type="primary">Prss52</name>
    <name type="synonym">Tesp3</name>
</gene>
<organism>
    <name type="scientific">Mus musculus</name>
    <name type="common">Mouse</name>
    <dbReference type="NCBI Taxonomy" id="10090"/>
    <lineage>
        <taxon>Eukaryota</taxon>
        <taxon>Metazoa</taxon>
        <taxon>Chordata</taxon>
        <taxon>Craniata</taxon>
        <taxon>Vertebrata</taxon>
        <taxon>Euteleostomi</taxon>
        <taxon>Mammalia</taxon>
        <taxon>Eutheria</taxon>
        <taxon>Euarchontoglires</taxon>
        <taxon>Glires</taxon>
        <taxon>Rodentia</taxon>
        <taxon>Myomorpha</taxon>
        <taxon>Muroidea</taxon>
        <taxon>Muridae</taxon>
        <taxon>Murinae</taxon>
        <taxon>Mus</taxon>
        <taxon>Mus</taxon>
    </lineage>
</organism>
<evidence type="ECO:0000250" key="1"/>
<evidence type="ECO:0000255" key="2"/>
<evidence type="ECO:0000255" key="3">
    <source>
        <dbReference type="PROSITE-ProRule" id="PRU00274"/>
    </source>
</evidence>
<evidence type="ECO:0000305" key="4"/>
<dbReference type="EC" id="3.4.21.-"/>
<dbReference type="EMBL" id="AB009660">
    <property type="protein sequence ID" value="BAF80445.1"/>
    <property type="molecule type" value="mRNA"/>
</dbReference>
<dbReference type="EMBL" id="AK006746">
    <property type="protein sequence ID" value="BAB24725.1"/>
    <property type="status" value="ALT_INIT"/>
    <property type="molecule type" value="mRNA"/>
</dbReference>
<dbReference type="EMBL" id="BC049714">
    <property type="protein sequence ID" value="AAH49714.1"/>
    <property type="molecule type" value="mRNA"/>
</dbReference>
<dbReference type="CCDS" id="CCDS36953.1"/>
<dbReference type="RefSeq" id="NP_082801.2">
    <property type="nucleotide sequence ID" value="NM_028525.2"/>
</dbReference>
<dbReference type="SMR" id="Q9D9M0"/>
<dbReference type="FunCoup" id="Q9D9M0">
    <property type="interactions" value="14"/>
</dbReference>
<dbReference type="STRING" id="10090.ENSMUSP00000022537"/>
<dbReference type="MEROPS" id="S01.419"/>
<dbReference type="GlyCosmos" id="Q9D9M0">
    <property type="glycosylation" value="1 site, No reported glycans"/>
</dbReference>
<dbReference type="GlyGen" id="Q9D9M0">
    <property type="glycosylation" value="1 site"/>
</dbReference>
<dbReference type="iPTMnet" id="Q9D9M0"/>
<dbReference type="PhosphoSitePlus" id="Q9D9M0"/>
<dbReference type="SwissPalm" id="Q9D9M0"/>
<dbReference type="PaxDb" id="10090-ENSMUSP00000022537"/>
<dbReference type="ProteomicsDB" id="291803"/>
<dbReference type="DNASU" id="73382"/>
<dbReference type="Ensembl" id="ENSMUST00000022537.6">
    <property type="protein sequence ID" value="ENSMUSP00000022537.6"/>
    <property type="gene ID" value="ENSMUSG00000021966.8"/>
</dbReference>
<dbReference type="GeneID" id="73382"/>
<dbReference type="KEGG" id="mmu:73382"/>
<dbReference type="UCSC" id="uc007uie.1">
    <property type="organism name" value="mouse"/>
</dbReference>
<dbReference type="AGR" id="MGI:1920632"/>
<dbReference type="CTD" id="73382"/>
<dbReference type="MGI" id="MGI:1920632">
    <property type="gene designation" value="Prss52"/>
</dbReference>
<dbReference type="VEuPathDB" id="HostDB:ENSMUSG00000021966"/>
<dbReference type="eggNOG" id="KOG3627">
    <property type="taxonomic scope" value="Eukaryota"/>
</dbReference>
<dbReference type="GeneTree" id="ENSGT00940000154999"/>
<dbReference type="HOGENOM" id="CLU_006842_0_4_1"/>
<dbReference type="InParanoid" id="Q9D9M0"/>
<dbReference type="OMA" id="ASHCFET"/>
<dbReference type="OrthoDB" id="546450at2759"/>
<dbReference type="PhylomeDB" id="Q9D9M0"/>
<dbReference type="TreeFam" id="TF351676"/>
<dbReference type="BioGRID-ORCS" id="73382">
    <property type="hits" value="0 hits in 78 CRISPR screens"/>
</dbReference>
<dbReference type="PRO" id="PR:Q9D9M0"/>
<dbReference type="Proteomes" id="UP000000589">
    <property type="component" value="Chromosome 14"/>
</dbReference>
<dbReference type="RNAct" id="Q9D9M0">
    <property type="molecule type" value="protein"/>
</dbReference>
<dbReference type="Bgee" id="ENSMUSG00000021966">
    <property type="expression patterns" value="Expressed in seminiferous tubule of testis and 12 other cell types or tissues"/>
</dbReference>
<dbReference type="GO" id="GO:0016020">
    <property type="term" value="C:membrane"/>
    <property type="evidence" value="ECO:0007669"/>
    <property type="project" value="UniProtKB-SubCell"/>
</dbReference>
<dbReference type="GO" id="GO:0004252">
    <property type="term" value="F:serine-type endopeptidase activity"/>
    <property type="evidence" value="ECO:0007669"/>
    <property type="project" value="InterPro"/>
</dbReference>
<dbReference type="GO" id="GO:0006508">
    <property type="term" value="P:proteolysis"/>
    <property type="evidence" value="ECO:0007669"/>
    <property type="project" value="UniProtKB-KW"/>
</dbReference>
<dbReference type="CDD" id="cd00190">
    <property type="entry name" value="Tryp_SPc"/>
    <property type="match status" value="1"/>
</dbReference>
<dbReference type="FunFam" id="2.40.10.10:FF:000006">
    <property type="entry name" value="Serine proteinase stubble"/>
    <property type="match status" value="1"/>
</dbReference>
<dbReference type="Gene3D" id="2.40.10.10">
    <property type="entry name" value="Trypsin-like serine proteases"/>
    <property type="match status" value="1"/>
</dbReference>
<dbReference type="InterPro" id="IPR009003">
    <property type="entry name" value="Peptidase_S1_PA"/>
</dbReference>
<dbReference type="InterPro" id="IPR043504">
    <property type="entry name" value="Peptidase_S1_PA_chymotrypsin"/>
</dbReference>
<dbReference type="InterPro" id="IPR001314">
    <property type="entry name" value="Peptidase_S1A"/>
</dbReference>
<dbReference type="InterPro" id="IPR001254">
    <property type="entry name" value="Trypsin_dom"/>
</dbReference>
<dbReference type="InterPro" id="IPR018114">
    <property type="entry name" value="TRYPSIN_HIS"/>
</dbReference>
<dbReference type="InterPro" id="IPR033116">
    <property type="entry name" value="TRYPSIN_SER"/>
</dbReference>
<dbReference type="PANTHER" id="PTHR24252">
    <property type="entry name" value="ACROSIN-RELATED"/>
    <property type="match status" value="1"/>
</dbReference>
<dbReference type="PANTHER" id="PTHR24252:SF7">
    <property type="entry name" value="HYALIN"/>
    <property type="match status" value="1"/>
</dbReference>
<dbReference type="Pfam" id="PF00089">
    <property type="entry name" value="Trypsin"/>
    <property type="match status" value="1"/>
</dbReference>
<dbReference type="PRINTS" id="PR00722">
    <property type="entry name" value="CHYMOTRYPSIN"/>
</dbReference>
<dbReference type="SMART" id="SM00020">
    <property type="entry name" value="Tryp_SPc"/>
    <property type="match status" value="1"/>
</dbReference>
<dbReference type="SUPFAM" id="SSF50494">
    <property type="entry name" value="Trypsin-like serine proteases"/>
    <property type="match status" value="1"/>
</dbReference>
<dbReference type="PROSITE" id="PS50240">
    <property type="entry name" value="TRYPSIN_DOM"/>
    <property type="match status" value="1"/>
</dbReference>
<dbReference type="PROSITE" id="PS00134">
    <property type="entry name" value="TRYPSIN_HIS"/>
    <property type="match status" value="1"/>
</dbReference>
<dbReference type="PROSITE" id="PS00135">
    <property type="entry name" value="TRYPSIN_SER"/>
    <property type="match status" value="1"/>
</dbReference>
<accession>Q9D9M0</accession>
<accession>A8C1Y0</accession>
<accession>Q80Y38</accession>
<reference key="1">
    <citation type="submission" date="1997-12" db="EMBL/GenBank/DDBJ databases">
        <title>Structural characterization of testicular specific serine protease, TESP3.</title>
        <authorList>
            <person name="Baba T."/>
            <person name="Kohno N."/>
            <person name="Sato S."/>
        </authorList>
    </citation>
    <scope>NUCLEOTIDE SEQUENCE [MRNA]</scope>
    <source>
        <tissue>Testis</tissue>
    </source>
</reference>
<reference key="2">
    <citation type="journal article" date="2005" name="Science">
        <title>The transcriptional landscape of the mammalian genome.</title>
        <authorList>
            <person name="Carninci P."/>
            <person name="Kasukawa T."/>
            <person name="Katayama S."/>
            <person name="Gough J."/>
            <person name="Frith M.C."/>
            <person name="Maeda N."/>
            <person name="Oyama R."/>
            <person name="Ravasi T."/>
            <person name="Lenhard B."/>
            <person name="Wells C."/>
            <person name="Kodzius R."/>
            <person name="Shimokawa K."/>
            <person name="Bajic V.B."/>
            <person name="Brenner S.E."/>
            <person name="Batalov S."/>
            <person name="Forrest A.R."/>
            <person name="Zavolan M."/>
            <person name="Davis M.J."/>
            <person name="Wilming L.G."/>
            <person name="Aidinis V."/>
            <person name="Allen J.E."/>
            <person name="Ambesi-Impiombato A."/>
            <person name="Apweiler R."/>
            <person name="Aturaliya R.N."/>
            <person name="Bailey T.L."/>
            <person name="Bansal M."/>
            <person name="Baxter L."/>
            <person name="Beisel K.W."/>
            <person name="Bersano T."/>
            <person name="Bono H."/>
            <person name="Chalk A.M."/>
            <person name="Chiu K.P."/>
            <person name="Choudhary V."/>
            <person name="Christoffels A."/>
            <person name="Clutterbuck D.R."/>
            <person name="Crowe M.L."/>
            <person name="Dalla E."/>
            <person name="Dalrymple B.P."/>
            <person name="de Bono B."/>
            <person name="Della Gatta G."/>
            <person name="di Bernardo D."/>
            <person name="Down T."/>
            <person name="Engstrom P."/>
            <person name="Fagiolini M."/>
            <person name="Faulkner G."/>
            <person name="Fletcher C.F."/>
            <person name="Fukushima T."/>
            <person name="Furuno M."/>
            <person name="Futaki S."/>
            <person name="Gariboldi M."/>
            <person name="Georgii-Hemming P."/>
            <person name="Gingeras T.R."/>
            <person name="Gojobori T."/>
            <person name="Green R.E."/>
            <person name="Gustincich S."/>
            <person name="Harbers M."/>
            <person name="Hayashi Y."/>
            <person name="Hensch T.K."/>
            <person name="Hirokawa N."/>
            <person name="Hill D."/>
            <person name="Huminiecki L."/>
            <person name="Iacono M."/>
            <person name="Ikeo K."/>
            <person name="Iwama A."/>
            <person name="Ishikawa T."/>
            <person name="Jakt M."/>
            <person name="Kanapin A."/>
            <person name="Katoh M."/>
            <person name="Kawasawa Y."/>
            <person name="Kelso J."/>
            <person name="Kitamura H."/>
            <person name="Kitano H."/>
            <person name="Kollias G."/>
            <person name="Krishnan S.P."/>
            <person name="Kruger A."/>
            <person name="Kummerfeld S.K."/>
            <person name="Kurochkin I.V."/>
            <person name="Lareau L.F."/>
            <person name="Lazarevic D."/>
            <person name="Lipovich L."/>
            <person name="Liu J."/>
            <person name="Liuni S."/>
            <person name="McWilliam S."/>
            <person name="Madan Babu M."/>
            <person name="Madera M."/>
            <person name="Marchionni L."/>
            <person name="Matsuda H."/>
            <person name="Matsuzawa S."/>
            <person name="Miki H."/>
            <person name="Mignone F."/>
            <person name="Miyake S."/>
            <person name="Morris K."/>
            <person name="Mottagui-Tabar S."/>
            <person name="Mulder N."/>
            <person name="Nakano N."/>
            <person name="Nakauchi H."/>
            <person name="Ng P."/>
            <person name="Nilsson R."/>
            <person name="Nishiguchi S."/>
            <person name="Nishikawa S."/>
            <person name="Nori F."/>
            <person name="Ohara O."/>
            <person name="Okazaki Y."/>
            <person name="Orlando V."/>
            <person name="Pang K.C."/>
            <person name="Pavan W.J."/>
            <person name="Pavesi G."/>
            <person name="Pesole G."/>
            <person name="Petrovsky N."/>
            <person name="Piazza S."/>
            <person name="Reed J."/>
            <person name="Reid J.F."/>
            <person name="Ring B.Z."/>
            <person name="Ringwald M."/>
            <person name="Rost B."/>
            <person name="Ruan Y."/>
            <person name="Salzberg S.L."/>
            <person name="Sandelin A."/>
            <person name="Schneider C."/>
            <person name="Schoenbach C."/>
            <person name="Sekiguchi K."/>
            <person name="Semple C.A."/>
            <person name="Seno S."/>
            <person name="Sessa L."/>
            <person name="Sheng Y."/>
            <person name="Shibata Y."/>
            <person name="Shimada H."/>
            <person name="Shimada K."/>
            <person name="Silva D."/>
            <person name="Sinclair B."/>
            <person name="Sperling S."/>
            <person name="Stupka E."/>
            <person name="Sugiura K."/>
            <person name="Sultana R."/>
            <person name="Takenaka Y."/>
            <person name="Taki K."/>
            <person name="Tammoja K."/>
            <person name="Tan S.L."/>
            <person name="Tang S."/>
            <person name="Taylor M.S."/>
            <person name="Tegner J."/>
            <person name="Teichmann S.A."/>
            <person name="Ueda H.R."/>
            <person name="van Nimwegen E."/>
            <person name="Verardo R."/>
            <person name="Wei C.L."/>
            <person name="Yagi K."/>
            <person name="Yamanishi H."/>
            <person name="Zabarovsky E."/>
            <person name="Zhu S."/>
            <person name="Zimmer A."/>
            <person name="Hide W."/>
            <person name="Bult C."/>
            <person name="Grimmond S.M."/>
            <person name="Teasdale R.D."/>
            <person name="Liu E.T."/>
            <person name="Brusic V."/>
            <person name="Quackenbush J."/>
            <person name="Wahlestedt C."/>
            <person name="Mattick J.S."/>
            <person name="Hume D.A."/>
            <person name="Kai C."/>
            <person name="Sasaki D."/>
            <person name="Tomaru Y."/>
            <person name="Fukuda S."/>
            <person name="Kanamori-Katayama M."/>
            <person name="Suzuki M."/>
            <person name="Aoki J."/>
            <person name="Arakawa T."/>
            <person name="Iida J."/>
            <person name="Imamura K."/>
            <person name="Itoh M."/>
            <person name="Kato T."/>
            <person name="Kawaji H."/>
            <person name="Kawagashira N."/>
            <person name="Kawashima T."/>
            <person name="Kojima M."/>
            <person name="Kondo S."/>
            <person name="Konno H."/>
            <person name="Nakano K."/>
            <person name="Ninomiya N."/>
            <person name="Nishio T."/>
            <person name="Okada M."/>
            <person name="Plessy C."/>
            <person name="Shibata K."/>
            <person name="Shiraki T."/>
            <person name="Suzuki S."/>
            <person name="Tagami M."/>
            <person name="Waki K."/>
            <person name="Watahiki A."/>
            <person name="Okamura-Oho Y."/>
            <person name="Suzuki H."/>
            <person name="Kawai J."/>
            <person name="Hayashizaki Y."/>
        </authorList>
    </citation>
    <scope>NUCLEOTIDE SEQUENCE [LARGE SCALE MRNA]</scope>
    <source>
        <strain>C57BL/6J</strain>
        <tissue>Testis</tissue>
    </source>
</reference>
<reference key="3">
    <citation type="journal article" date="2004" name="Genome Res.">
        <title>The status, quality, and expansion of the NIH full-length cDNA project: the Mammalian Gene Collection (MGC).</title>
        <authorList>
            <consortium name="The MGC Project Team"/>
        </authorList>
    </citation>
    <scope>NUCLEOTIDE SEQUENCE [LARGE SCALE MRNA]</scope>
    <source>
        <tissue>Testis</tissue>
    </source>
</reference>